<dbReference type="EMBL" id="CP000671">
    <property type="protein sequence ID" value="ABQ98061.1"/>
    <property type="molecule type" value="Genomic_DNA"/>
</dbReference>
<dbReference type="SMR" id="A5UBB0"/>
<dbReference type="KEGG" id="hip:CGSHiEE_03170"/>
<dbReference type="HOGENOM" id="CLU_161438_2_1_6"/>
<dbReference type="GO" id="GO:0005829">
    <property type="term" value="C:cytosol"/>
    <property type="evidence" value="ECO:0007669"/>
    <property type="project" value="TreeGrafter"/>
</dbReference>
<dbReference type="Gene3D" id="3.30.70.260">
    <property type="match status" value="1"/>
</dbReference>
<dbReference type="HAMAP" id="MF_00659">
    <property type="entry name" value="UPF0250"/>
    <property type="match status" value="1"/>
</dbReference>
<dbReference type="InterPro" id="IPR007454">
    <property type="entry name" value="UPF0250_YbeD-like"/>
</dbReference>
<dbReference type="InterPro" id="IPR027471">
    <property type="entry name" value="YbeD-like_sf"/>
</dbReference>
<dbReference type="NCBIfam" id="NF003447">
    <property type="entry name" value="PRK04998.1"/>
    <property type="match status" value="1"/>
</dbReference>
<dbReference type="PANTHER" id="PTHR38036">
    <property type="entry name" value="UPF0250 PROTEIN YBED"/>
    <property type="match status" value="1"/>
</dbReference>
<dbReference type="PANTHER" id="PTHR38036:SF1">
    <property type="entry name" value="UPF0250 PROTEIN YBED"/>
    <property type="match status" value="1"/>
</dbReference>
<dbReference type="Pfam" id="PF04359">
    <property type="entry name" value="DUF493"/>
    <property type="match status" value="1"/>
</dbReference>
<dbReference type="SUPFAM" id="SSF117991">
    <property type="entry name" value="YbeD/HP0495-like"/>
    <property type="match status" value="1"/>
</dbReference>
<sequence>MTIENDYAKLKELMEFPAKMTFKVAGINREGLAQDLIQVVQKYIKGDYIPKEKRSSKGTYNSVSIDIIAENFDQVETLYKELAKVEGVKMVI</sequence>
<accession>A5UBB0</accession>
<name>Y3170_HAEIE</name>
<organism>
    <name type="scientific">Haemophilus influenzae (strain PittEE)</name>
    <dbReference type="NCBI Taxonomy" id="374930"/>
    <lineage>
        <taxon>Bacteria</taxon>
        <taxon>Pseudomonadati</taxon>
        <taxon>Pseudomonadota</taxon>
        <taxon>Gammaproteobacteria</taxon>
        <taxon>Pasteurellales</taxon>
        <taxon>Pasteurellaceae</taxon>
        <taxon>Haemophilus</taxon>
    </lineage>
</organism>
<reference key="1">
    <citation type="journal article" date="2007" name="Genome Biol.">
        <title>Characterization and modeling of the Haemophilus influenzae core and supragenomes based on the complete genomic sequences of Rd and 12 clinical nontypeable strains.</title>
        <authorList>
            <person name="Hogg J.S."/>
            <person name="Hu F.Z."/>
            <person name="Janto B."/>
            <person name="Boissy R."/>
            <person name="Hayes J."/>
            <person name="Keefe R."/>
            <person name="Post J.C."/>
            <person name="Ehrlich G.D."/>
        </authorList>
    </citation>
    <scope>NUCLEOTIDE SEQUENCE [LARGE SCALE GENOMIC DNA]</scope>
    <source>
        <strain>PittEE</strain>
    </source>
</reference>
<gene>
    <name type="ordered locus">CGSHiEE_03170</name>
</gene>
<evidence type="ECO:0000255" key="1">
    <source>
        <dbReference type="HAMAP-Rule" id="MF_00659"/>
    </source>
</evidence>
<protein>
    <recommendedName>
        <fullName evidence="1">UPF0250 protein CGSHiEE_03170</fullName>
    </recommendedName>
</protein>
<proteinExistence type="inferred from homology"/>
<feature type="chain" id="PRO_1000061870" description="UPF0250 protein CGSHiEE_03170">
    <location>
        <begin position="1"/>
        <end position="92"/>
    </location>
</feature>
<comment type="similarity">
    <text evidence="1">Belongs to the UPF0250 family.</text>
</comment>